<sequence length="170" mass="18983">MDVKWDSMTFDEMEEVKRNVFFTTLEQLKGWARSNSLWPLTFGLACCAIEMMAVGGAHYDLDRFGSFFRASPRQSDVMIVSGTVTKKMAPLLRRLYDQMPEPKWVIAMGSCATAGGPYVKSYSVVKGVDQIVPVDVYIPGCPPNPAALIYGIHKLKEKIRLEAKTGKKVL</sequence>
<protein>
    <recommendedName>
        <fullName evidence="1">NADH-quinone oxidoreductase subunit B</fullName>
        <ecNumber evidence="1">7.1.1.-</ecNumber>
    </recommendedName>
    <alternativeName>
        <fullName evidence="1">NADH dehydrogenase I subunit B</fullName>
    </alternativeName>
    <alternativeName>
        <fullName evidence="1">NDH-1 subunit B</fullName>
    </alternativeName>
</protein>
<accession>A4ITI6</accession>
<feature type="chain" id="PRO_0000376237" description="NADH-quinone oxidoreductase subunit B">
    <location>
        <begin position="1"/>
        <end position="170"/>
    </location>
</feature>
<feature type="binding site" evidence="1">
    <location>
        <position position="46"/>
    </location>
    <ligand>
        <name>[4Fe-4S] cluster</name>
        <dbReference type="ChEBI" id="CHEBI:49883"/>
    </ligand>
</feature>
<feature type="binding site" evidence="1">
    <location>
        <position position="47"/>
    </location>
    <ligand>
        <name>[4Fe-4S] cluster</name>
        <dbReference type="ChEBI" id="CHEBI:49883"/>
    </ligand>
</feature>
<feature type="binding site" evidence="1">
    <location>
        <position position="111"/>
    </location>
    <ligand>
        <name>[4Fe-4S] cluster</name>
        <dbReference type="ChEBI" id="CHEBI:49883"/>
    </ligand>
</feature>
<feature type="binding site" evidence="1">
    <location>
        <position position="141"/>
    </location>
    <ligand>
        <name>[4Fe-4S] cluster</name>
        <dbReference type="ChEBI" id="CHEBI:49883"/>
    </ligand>
</feature>
<organism>
    <name type="scientific">Geobacillus thermodenitrificans (strain NG80-2)</name>
    <dbReference type="NCBI Taxonomy" id="420246"/>
    <lineage>
        <taxon>Bacteria</taxon>
        <taxon>Bacillati</taxon>
        <taxon>Bacillota</taxon>
        <taxon>Bacilli</taxon>
        <taxon>Bacillales</taxon>
        <taxon>Anoxybacillaceae</taxon>
        <taxon>Geobacillus</taxon>
    </lineage>
</organism>
<dbReference type="EC" id="7.1.1.-" evidence="1"/>
<dbReference type="EMBL" id="CP000557">
    <property type="protein sequence ID" value="ABO68640.1"/>
    <property type="molecule type" value="Genomic_DNA"/>
</dbReference>
<dbReference type="RefSeq" id="WP_011888395.1">
    <property type="nucleotide sequence ID" value="NC_009328.1"/>
</dbReference>
<dbReference type="SMR" id="A4ITI6"/>
<dbReference type="GeneID" id="87622589"/>
<dbReference type="KEGG" id="gtn:GTNG_3301"/>
<dbReference type="eggNOG" id="COG0377">
    <property type="taxonomic scope" value="Bacteria"/>
</dbReference>
<dbReference type="HOGENOM" id="CLU_055737_7_3_9"/>
<dbReference type="Proteomes" id="UP000001578">
    <property type="component" value="Chromosome"/>
</dbReference>
<dbReference type="GO" id="GO:0005886">
    <property type="term" value="C:plasma membrane"/>
    <property type="evidence" value="ECO:0007669"/>
    <property type="project" value="UniProtKB-SubCell"/>
</dbReference>
<dbReference type="GO" id="GO:0045271">
    <property type="term" value="C:respiratory chain complex I"/>
    <property type="evidence" value="ECO:0007669"/>
    <property type="project" value="TreeGrafter"/>
</dbReference>
<dbReference type="GO" id="GO:0051539">
    <property type="term" value="F:4 iron, 4 sulfur cluster binding"/>
    <property type="evidence" value="ECO:0007669"/>
    <property type="project" value="UniProtKB-KW"/>
</dbReference>
<dbReference type="GO" id="GO:0005506">
    <property type="term" value="F:iron ion binding"/>
    <property type="evidence" value="ECO:0007669"/>
    <property type="project" value="UniProtKB-UniRule"/>
</dbReference>
<dbReference type="GO" id="GO:0008137">
    <property type="term" value="F:NADH dehydrogenase (ubiquinone) activity"/>
    <property type="evidence" value="ECO:0007669"/>
    <property type="project" value="InterPro"/>
</dbReference>
<dbReference type="GO" id="GO:0050136">
    <property type="term" value="F:NADH:ubiquinone reductase (non-electrogenic) activity"/>
    <property type="evidence" value="ECO:0007669"/>
    <property type="project" value="UniProtKB-UniRule"/>
</dbReference>
<dbReference type="GO" id="GO:0048038">
    <property type="term" value="F:quinone binding"/>
    <property type="evidence" value="ECO:0007669"/>
    <property type="project" value="UniProtKB-KW"/>
</dbReference>
<dbReference type="GO" id="GO:0009060">
    <property type="term" value="P:aerobic respiration"/>
    <property type="evidence" value="ECO:0007669"/>
    <property type="project" value="TreeGrafter"/>
</dbReference>
<dbReference type="GO" id="GO:0015990">
    <property type="term" value="P:electron transport coupled proton transport"/>
    <property type="evidence" value="ECO:0007669"/>
    <property type="project" value="TreeGrafter"/>
</dbReference>
<dbReference type="FunFam" id="3.40.50.12280:FF:000002">
    <property type="entry name" value="NADH-quinone oxidoreductase subunit B"/>
    <property type="match status" value="1"/>
</dbReference>
<dbReference type="Gene3D" id="3.40.50.12280">
    <property type="match status" value="1"/>
</dbReference>
<dbReference type="HAMAP" id="MF_01356">
    <property type="entry name" value="NDH1_NuoB"/>
    <property type="match status" value="1"/>
</dbReference>
<dbReference type="InterPro" id="IPR006137">
    <property type="entry name" value="NADH_UbQ_OxRdtase-like_20kDa"/>
</dbReference>
<dbReference type="InterPro" id="IPR006138">
    <property type="entry name" value="NADH_UQ_OxRdtase_20Kd_su"/>
</dbReference>
<dbReference type="NCBIfam" id="TIGR01957">
    <property type="entry name" value="nuoB_fam"/>
    <property type="match status" value="1"/>
</dbReference>
<dbReference type="NCBIfam" id="NF005012">
    <property type="entry name" value="PRK06411.1"/>
    <property type="match status" value="1"/>
</dbReference>
<dbReference type="PANTHER" id="PTHR11995">
    <property type="entry name" value="NADH DEHYDROGENASE"/>
    <property type="match status" value="1"/>
</dbReference>
<dbReference type="PANTHER" id="PTHR11995:SF14">
    <property type="entry name" value="NADH DEHYDROGENASE [UBIQUINONE] IRON-SULFUR PROTEIN 7, MITOCHONDRIAL"/>
    <property type="match status" value="1"/>
</dbReference>
<dbReference type="Pfam" id="PF01058">
    <property type="entry name" value="Oxidored_q6"/>
    <property type="match status" value="1"/>
</dbReference>
<dbReference type="SUPFAM" id="SSF56770">
    <property type="entry name" value="HydA/Nqo6-like"/>
    <property type="match status" value="1"/>
</dbReference>
<reference key="1">
    <citation type="journal article" date="2007" name="Proc. Natl. Acad. Sci. U.S.A.">
        <title>Genome and proteome of long-chain alkane degrading Geobacillus thermodenitrificans NG80-2 isolated from a deep-subsurface oil reservoir.</title>
        <authorList>
            <person name="Feng L."/>
            <person name="Wang W."/>
            <person name="Cheng J."/>
            <person name="Ren Y."/>
            <person name="Zhao G."/>
            <person name="Gao C."/>
            <person name="Tang Y."/>
            <person name="Liu X."/>
            <person name="Han W."/>
            <person name="Peng X."/>
            <person name="Liu R."/>
            <person name="Wang L."/>
        </authorList>
    </citation>
    <scope>NUCLEOTIDE SEQUENCE [LARGE SCALE GENOMIC DNA]</scope>
    <source>
        <strain>NG80-2</strain>
    </source>
</reference>
<comment type="function">
    <text evidence="1">NDH-1 shuttles electrons from NADH, via FMN and iron-sulfur (Fe-S) centers, to quinones in the respiratory chain. The immediate electron acceptor for the enzyme in this species is believed to be a menaquinone. Couples the redox reaction to proton translocation (for every two electrons transferred, four hydrogen ions are translocated across the cytoplasmic membrane), and thus conserves the redox energy in a proton gradient.</text>
</comment>
<comment type="catalytic activity">
    <reaction evidence="1">
        <text>a quinone + NADH + 5 H(+)(in) = a quinol + NAD(+) + 4 H(+)(out)</text>
        <dbReference type="Rhea" id="RHEA:57888"/>
        <dbReference type="ChEBI" id="CHEBI:15378"/>
        <dbReference type="ChEBI" id="CHEBI:24646"/>
        <dbReference type="ChEBI" id="CHEBI:57540"/>
        <dbReference type="ChEBI" id="CHEBI:57945"/>
        <dbReference type="ChEBI" id="CHEBI:132124"/>
    </reaction>
</comment>
<comment type="cofactor">
    <cofactor evidence="1">
        <name>[4Fe-4S] cluster</name>
        <dbReference type="ChEBI" id="CHEBI:49883"/>
    </cofactor>
    <text evidence="1">Binds 1 [4Fe-4S] cluster.</text>
</comment>
<comment type="subunit">
    <text evidence="1">NDH-1 is composed of 14 different subunits. Subunits NuoB, C, D, E, F, and G constitute the peripheral sector of the complex.</text>
</comment>
<comment type="subcellular location">
    <subcellularLocation>
        <location evidence="1">Cell membrane</location>
        <topology evidence="1">Peripheral membrane protein</topology>
        <orientation evidence="1">Cytoplasmic side</orientation>
    </subcellularLocation>
</comment>
<comment type="similarity">
    <text evidence="1">Belongs to the complex I 20 kDa subunit family.</text>
</comment>
<gene>
    <name evidence="1" type="primary">nuoB</name>
    <name type="ordered locus">GTNG_3301</name>
</gene>
<name>NUOB_GEOTN</name>
<keyword id="KW-0004">4Fe-4S</keyword>
<keyword id="KW-1003">Cell membrane</keyword>
<keyword id="KW-0408">Iron</keyword>
<keyword id="KW-0411">Iron-sulfur</keyword>
<keyword id="KW-0472">Membrane</keyword>
<keyword id="KW-0479">Metal-binding</keyword>
<keyword id="KW-0520">NAD</keyword>
<keyword id="KW-0874">Quinone</keyword>
<keyword id="KW-1278">Translocase</keyword>
<keyword id="KW-0813">Transport</keyword>
<evidence type="ECO:0000255" key="1">
    <source>
        <dbReference type="HAMAP-Rule" id="MF_01356"/>
    </source>
</evidence>
<proteinExistence type="inferred from homology"/>